<proteinExistence type="inferred from homology"/>
<dbReference type="EMBL" id="BX950851">
    <property type="protein sequence ID" value="CAG75319.1"/>
    <property type="molecule type" value="Genomic_DNA"/>
</dbReference>
<dbReference type="RefSeq" id="WP_009112984.1">
    <property type="nucleotide sequence ID" value="NC_004547.2"/>
</dbReference>
<dbReference type="SMR" id="Q6D4H4"/>
<dbReference type="STRING" id="218491.ECA2416"/>
<dbReference type="GeneID" id="93390139"/>
<dbReference type="KEGG" id="eca:ECA2416"/>
<dbReference type="eggNOG" id="COG0776">
    <property type="taxonomic scope" value="Bacteria"/>
</dbReference>
<dbReference type="HOGENOM" id="CLU_105066_1_3_6"/>
<dbReference type="OrthoDB" id="9797747at2"/>
<dbReference type="Proteomes" id="UP000007966">
    <property type="component" value="Chromosome"/>
</dbReference>
<dbReference type="GO" id="GO:0005829">
    <property type="term" value="C:cytosol"/>
    <property type="evidence" value="ECO:0007669"/>
    <property type="project" value="TreeGrafter"/>
</dbReference>
<dbReference type="GO" id="GO:0003677">
    <property type="term" value="F:DNA binding"/>
    <property type="evidence" value="ECO:0007669"/>
    <property type="project" value="UniProtKB-UniRule"/>
</dbReference>
<dbReference type="GO" id="GO:0030527">
    <property type="term" value="F:structural constituent of chromatin"/>
    <property type="evidence" value="ECO:0007669"/>
    <property type="project" value="InterPro"/>
</dbReference>
<dbReference type="GO" id="GO:0006310">
    <property type="term" value="P:DNA recombination"/>
    <property type="evidence" value="ECO:0007669"/>
    <property type="project" value="UniProtKB-UniRule"/>
</dbReference>
<dbReference type="GO" id="GO:0009893">
    <property type="term" value="P:positive regulation of metabolic process"/>
    <property type="evidence" value="ECO:0007669"/>
    <property type="project" value="UniProtKB-ARBA"/>
</dbReference>
<dbReference type="GO" id="GO:0006355">
    <property type="term" value="P:regulation of DNA-templated transcription"/>
    <property type="evidence" value="ECO:0007669"/>
    <property type="project" value="UniProtKB-UniRule"/>
</dbReference>
<dbReference type="GO" id="GO:0006417">
    <property type="term" value="P:regulation of translation"/>
    <property type="evidence" value="ECO:0007669"/>
    <property type="project" value="UniProtKB-UniRule"/>
</dbReference>
<dbReference type="CDD" id="cd13835">
    <property type="entry name" value="IHF_A"/>
    <property type="match status" value="1"/>
</dbReference>
<dbReference type="FunFam" id="4.10.520.10:FF:000002">
    <property type="entry name" value="Integration host factor subunit alpha"/>
    <property type="match status" value="1"/>
</dbReference>
<dbReference type="Gene3D" id="4.10.520.10">
    <property type="entry name" value="IHF-like DNA-binding proteins"/>
    <property type="match status" value="1"/>
</dbReference>
<dbReference type="HAMAP" id="MF_00380">
    <property type="entry name" value="IHF_alpha"/>
    <property type="match status" value="1"/>
</dbReference>
<dbReference type="InterPro" id="IPR000119">
    <property type="entry name" value="Hist_DNA-bd"/>
</dbReference>
<dbReference type="InterPro" id="IPR020816">
    <property type="entry name" value="Histone-like_DNA-bd_CS"/>
</dbReference>
<dbReference type="InterPro" id="IPR010992">
    <property type="entry name" value="IHF-like_DNA-bd_dom_sf"/>
</dbReference>
<dbReference type="InterPro" id="IPR005684">
    <property type="entry name" value="IHF_alpha"/>
</dbReference>
<dbReference type="NCBIfam" id="TIGR00987">
    <property type="entry name" value="himA"/>
    <property type="match status" value="1"/>
</dbReference>
<dbReference type="NCBIfam" id="NF001401">
    <property type="entry name" value="PRK00285.1"/>
    <property type="match status" value="1"/>
</dbReference>
<dbReference type="PANTHER" id="PTHR33175">
    <property type="entry name" value="DNA-BINDING PROTEIN HU"/>
    <property type="match status" value="1"/>
</dbReference>
<dbReference type="PANTHER" id="PTHR33175:SF2">
    <property type="entry name" value="INTEGRATION HOST FACTOR SUBUNIT ALPHA"/>
    <property type="match status" value="1"/>
</dbReference>
<dbReference type="Pfam" id="PF00216">
    <property type="entry name" value="Bac_DNA_binding"/>
    <property type="match status" value="1"/>
</dbReference>
<dbReference type="PRINTS" id="PR01727">
    <property type="entry name" value="DNABINDINGHU"/>
</dbReference>
<dbReference type="SMART" id="SM00411">
    <property type="entry name" value="BHL"/>
    <property type="match status" value="1"/>
</dbReference>
<dbReference type="SUPFAM" id="SSF47729">
    <property type="entry name" value="IHF-like DNA-binding proteins"/>
    <property type="match status" value="1"/>
</dbReference>
<dbReference type="PROSITE" id="PS00045">
    <property type="entry name" value="HISTONE_LIKE"/>
    <property type="match status" value="1"/>
</dbReference>
<accession>Q6D4H4</accession>
<comment type="function">
    <text evidence="1">This protein is one of the two subunits of integration host factor, a specific DNA-binding protein that functions in genetic recombination as well as in transcriptional and translational control.</text>
</comment>
<comment type="subunit">
    <text evidence="1">Heterodimer of an alpha and a beta chain.</text>
</comment>
<comment type="similarity">
    <text evidence="1">Belongs to the bacterial histone-like protein family.</text>
</comment>
<protein>
    <recommendedName>
        <fullName evidence="1">Integration host factor subunit alpha</fullName>
        <shortName evidence="1">IHF-alpha</shortName>
    </recommendedName>
</protein>
<reference key="1">
    <citation type="journal article" date="2004" name="Proc. Natl. Acad. Sci. U.S.A.">
        <title>Genome sequence of the enterobacterial phytopathogen Erwinia carotovora subsp. atroseptica and characterization of virulence factors.</title>
        <authorList>
            <person name="Bell K.S."/>
            <person name="Sebaihia M."/>
            <person name="Pritchard L."/>
            <person name="Holden M.T.G."/>
            <person name="Hyman L.J."/>
            <person name="Holeva M.C."/>
            <person name="Thomson N.R."/>
            <person name="Bentley S.D."/>
            <person name="Churcher L.J.C."/>
            <person name="Mungall K."/>
            <person name="Atkin R."/>
            <person name="Bason N."/>
            <person name="Brooks K."/>
            <person name="Chillingworth T."/>
            <person name="Clark K."/>
            <person name="Doggett J."/>
            <person name="Fraser A."/>
            <person name="Hance Z."/>
            <person name="Hauser H."/>
            <person name="Jagels K."/>
            <person name="Moule S."/>
            <person name="Norbertczak H."/>
            <person name="Ormond D."/>
            <person name="Price C."/>
            <person name="Quail M.A."/>
            <person name="Sanders M."/>
            <person name="Walker D."/>
            <person name="Whitehead S."/>
            <person name="Salmond G.P.C."/>
            <person name="Birch P.R.J."/>
            <person name="Parkhill J."/>
            <person name="Toth I.K."/>
        </authorList>
    </citation>
    <scope>NUCLEOTIDE SEQUENCE [LARGE SCALE GENOMIC DNA]</scope>
    <source>
        <strain>SCRI 1043 / ATCC BAA-672</strain>
    </source>
</reference>
<sequence length="98" mass="11239">MALTKAEMSEYLFEKLGLSKRDAKELVELFFEEVRRALENGEQVKLSGFGNFDLRDKNQRPGRNPKTGEDIPITARRVVTFRPGQKLKSRVENASPKE</sequence>
<gene>
    <name evidence="1" type="primary">ihfA</name>
    <name evidence="1" type="synonym">himA</name>
    <name type="ordered locus">ECA2416</name>
</gene>
<evidence type="ECO:0000255" key="1">
    <source>
        <dbReference type="HAMAP-Rule" id="MF_00380"/>
    </source>
</evidence>
<evidence type="ECO:0000256" key="2">
    <source>
        <dbReference type="SAM" id="MobiDB-lite"/>
    </source>
</evidence>
<organism>
    <name type="scientific">Pectobacterium atrosepticum (strain SCRI 1043 / ATCC BAA-672)</name>
    <name type="common">Erwinia carotovora subsp. atroseptica</name>
    <dbReference type="NCBI Taxonomy" id="218491"/>
    <lineage>
        <taxon>Bacteria</taxon>
        <taxon>Pseudomonadati</taxon>
        <taxon>Pseudomonadota</taxon>
        <taxon>Gammaproteobacteria</taxon>
        <taxon>Enterobacterales</taxon>
        <taxon>Pectobacteriaceae</taxon>
        <taxon>Pectobacterium</taxon>
    </lineage>
</organism>
<feature type="chain" id="PRO_0000277728" description="Integration host factor subunit alpha">
    <location>
        <begin position="1"/>
        <end position="98"/>
    </location>
</feature>
<feature type="region of interest" description="Disordered" evidence="2">
    <location>
        <begin position="49"/>
        <end position="71"/>
    </location>
</feature>
<keyword id="KW-0233">DNA recombination</keyword>
<keyword id="KW-0238">DNA-binding</keyword>
<keyword id="KW-1185">Reference proteome</keyword>
<keyword id="KW-0804">Transcription</keyword>
<keyword id="KW-0805">Transcription regulation</keyword>
<keyword id="KW-0810">Translation regulation</keyword>
<name>IHFA_PECAS</name>